<name>CYB6_PROMS</name>
<accession>A2BPC6</accession>
<gene>
    <name evidence="1" type="primary">petB</name>
    <name type="ordered locus">A9601_03491</name>
</gene>
<proteinExistence type="inferred from homology"/>
<dbReference type="EMBL" id="CP000551">
    <property type="protein sequence ID" value="ABM69637.1"/>
    <property type="molecule type" value="Genomic_DNA"/>
</dbReference>
<dbReference type="RefSeq" id="WP_011817812.1">
    <property type="nucleotide sequence ID" value="NC_008816.1"/>
</dbReference>
<dbReference type="SMR" id="A2BPC6"/>
<dbReference type="STRING" id="146891.A9601_03491"/>
<dbReference type="KEGG" id="pmb:A9601_03491"/>
<dbReference type="eggNOG" id="COG1290">
    <property type="taxonomic scope" value="Bacteria"/>
</dbReference>
<dbReference type="HOGENOM" id="CLU_031114_0_2_3"/>
<dbReference type="OrthoDB" id="9804503at2"/>
<dbReference type="Proteomes" id="UP000002590">
    <property type="component" value="Chromosome"/>
</dbReference>
<dbReference type="GO" id="GO:0031676">
    <property type="term" value="C:plasma membrane-derived thylakoid membrane"/>
    <property type="evidence" value="ECO:0007669"/>
    <property type="project" value="UniProtKB-SubCell"/>
</dbReference>
<dbReference type="GO" id="GO:0045158">
    <property type="term" value="F:electron transporter, transferring electrons within cytochrome b6/f complex of photosystem II activity"/>
    <property type="evidence" value="ECO:0007669"/>
    <property type="project" value="UniProtKB-UniRule"/>
</dbReference>
<dbReference type="GO" id="GO:0046872">
    <property type="term" value="F:metal ion binding"/>
    <property type="evidence" value="ECO:0007669"/>
    <property type="project" value="UniProtKB-KW"/>
</dbReference>
<dbReference type="GO" id="GO:0016491">
    <property type="term" value="F:oxidoreductase activity"/>
    <property type="evidence" value="ECO:0007669"/>
    <property type="project" value="InterPro"/>
</dbReference>
<dbReference type="GO" id="GO:0015979">
    <property type="term" value="P:photosynthesis"/>
    <property type="evidence" value="ECO:0007669"/>
    <property type="project" value="UniProtKB-UniRule"/>
</dbReference>
<dbReference type="GO" id="GO:0022904">
    <property type="term" value="P:respiratory electron transport chain"/>
    <property type="evidence" value="ECO:0007669"/>
    <property type="project" value="InterPro"/>
</dbReference>
<dbReference type="CDD" id="cd00284">
    <property type="entry name" value="Cytochrome_b_N"/>
    <property type="match status" value="1"/>
</dbReference>
<dbReference type="FunFam" id="1.20.810.10:FF:000001">
    <property type="entry name" value="Cytochrome b6"/>
    <property type="match status" value="1"/>
</dbReference>
<dbReference type="Gene3D" id="1.20.810.10">
    <property type="entry name" value="Cytochrome Bc1 Complex, Chain C"/>
    <property type="match status" value="1"/>
</dbReference>
<dbReference type="HAMAP" id="MF_00633">
    <property type="entry name" value="Cytb6_f_cytb6"/>
    <property type="match status" value="1"/>
</dbReference>
<dbReference type="InterPro" id="IPR005797">
    <property type="entry name" value="Cyt_b/b6_N"/>
</dbReference>
<dbReference type="InterPro" id="IPR023530">
    <property type="entry name" value="Cyt_B6_PetB"/>
</dbReference>
<dbReference type="InterPro" id="IPR027387">
    <property type="entry name" value="Cytb/b6-like_sf"/>
</dbReference>
<dbReference type="InterPro" id="IPR048259">
    <property type="entry name" value="Cytochrome_b_N_euk/bac"/>
</dbReference>
<dbReference type="InterPro" id="IPR016174">
    <property type="entry name" value="Di-haem_cyt_TM"/>
</dbReference>
<dbReference type="NCBIfam" id="NF002990">
    <property type="entry name" value="PRK03735.1"/>
    <property type="match status" value="1"/>
</dbReference>
<dbReference type="PANTHER" id="PTHR19271">
    <property type="entry name" value="CYTOCHROME B"/>
    <property type="match status" value="1"/>
</dbReference>
<dbReference type="PANTHER" id="PTHR19271:SF16">
    <property type="entry name" value="CYTOCHROME B"/>
    <property type="match status" value="1"/>
</dbReference>
<dbReference type="Pfam" id="PF00033">
    <property type="entry name" value="Cytochrome_B"/>
    <property type="match status" value="1"/>
</dbReference>
<dbReference type="PIRSF" id="PIRSF000032">
    <property type="entry name" value="Cytochrome_b6"/>
    <property type="match status" value="1"/>
</dbReference>
<dbReference type="SUPFAM" id="SSF81342">
    <property type="entry name" value="Transmembrane di-heme cytochromes"/>
    <property type="match status" value="1"/>
</dbReference>
<dbReference type="PROSITE" id="PS51002">
    <property type="entry name" value="CYTB_NTER"/>
    <property type="match status" value="1"/>
</dbReference>
<comment type="function">
    <text evidence="1">Component of the cytochrome b6-f complex, which mediates electron transfer between photosystem II (PSII) and photosystem I (PSI), cyclic electron flow around PSI, and state transitions.</text>
</comment>
<comment type="cofactor">
    <cofactor evidence="1">
        <name>heme b</name>
        <dbReference type="ChEBI" id="CHEBI:60344"/>
    </cofactor>
    <text evidence="1">Binds 2 heme b groups non-covalently with two histidine residues as axial ligands.</text>
</comment>
<comment type="cofactor">
    <cofactor evidence="1">
        <name>heme c</name>
        <dbReference type="ChEBI" id="CHEBI:61717"/>
    </cofactor>
    <text evidence="1">Binds one heme group covalently by a single cysteine link with no axial amino acid ligand. This heme was named heme ci.</text>
</comment>
<comment type="subunit">
    <text evidence="1">The 4 large subunits of the cytochrome b6-f complex are cytochrome b6, subunit IV (17 kDa polypeptide, PetD), cytochrome f and the Rieske protein, while the 4 small subunits are PetG, PetL, PetM and PetN. The complex functions as a dimer.</text>
</comment>
<comment type="subcellular location">
    <subcellularLocation>
        <location evidence="1">Cellular thylakoid membrane</location>
        <topology evidence="1">Multi-pass membrane protein</topology>
    </subcellularLocation>
</comment>
<comment type="miscellaneous">
    <text evidence="1">Heme 1 (or BH or b566) is high-potential and absorbs at about 566 nm, and heme 2 (or BL or b562) is low-potential and absorbs at about 562 nm.</text>
</comment>
<comment type="similarity">
    <text evidence="1">Belongs to the cytochrome b family. PetB subfamily.</text>
</comment>
<keyword id="KW-0249">Electron transport</keyword>
<keyword id="KW-0349">Heme</keyword>
<keyword id="KW-0408">Iron</keyword>
<keyword id="KW-0472">Membrane</keyword>
<keyword id="KW-0479">Metal-binding</keyword>
<keyword id="KW-0602">Photosynthesis</keyword>
<keyword id="KW-0793">Thylakoid</keyword>
<keyword id="KW-0812">Transmembrane</keyword>
<keyword id="KW-1133">Transmembrane helix</keyword>
<keyword id="KW-0813">Transport</keyword>
<sequence length="218" mass="24617">MANSSSVYDWFQERLEIQDITDDVTSKYVPPHVNIFYCLGGITLVCFLIQFATGFAMTFYYKPTVTQAYSSVSYLMTDVSFGWLIRSVHRWSASMMVLMLILHVFRVYLTGGFKRPRELTWVTGVVMAVITVAFGVTGYSLPWDQVGYWAVKIVSGVPAAIPVIGDFMVELLRGGESVGQSTLTRFYSLHTFVLPWSLAVFMLMHFLMIRKQGISGPL</sequence>
<protein>
    <recommendedName>
        <fullName evidence="1">Cytochrome b6</fullName>
    </recommendedName>
</protein>
<evidence type="ECO:0000255" key="1">
    <source>
        <dbReference type="HAMAP-Rule" id="MF_00633"/>
    </source>
</evidence>
<reference key="1">
    <citation type="journal article" date="2007" name="PLoS Genet.">
        <title>Patterns and implications of gene gain and loss in the evolution of Prochlorococcus.</title>
        <authorList>
            <person name="Kettler G.C."/>
            <person name="Martiny A.C."/>
            <person name="Huang K."/>
            <person name="Zucker J."/>
            <person name="Coleman M.L."/>
            <person name="Rodrigue S."/>
            <person name="Chen F."/>
            <person name="Lapidus A."/>
            <person name="Ferriera S."/>
            <person name="Johnson J."/>
            <person name="Steglich C."/>
            <person name="Church G.M."/>
            <person name="Richardson P."/>
            <person name="Chisholm S.W."/>
        </authorList>
    </citation>
    <scope>NUCLEOTIDE SEQUENCE [LARGE SCALE GENOMIC DNA]</scope>
    <source>
        <strain>AS9601</strain>
    </source>
</reference>
<feature type="chain" id="PRO_1000061413" description="Cytochrome b6">
    <location>
        <begin position="1"/>
        <end position="218"/>
    </location>
</feature>
<feature type="transmembrane region" description="Helical" evidence="1">
    <location>
        <begin position="35"/>
        <end position="55"/>
    </location>
</feature>
<feature type="transmembrane region" description="Helical" evidence="1">
    <location>
        <begin position="93"/>
        <end position="113"/>
    </location>
</feature>
<feature type="transmembrane region" description="Helical" evidence="1">
    <location>
        <begin position="119"/>
        <end position="139"/>
    </location>
</feature>
<feature type="transmembrane region" description="Helical" evidence="1">
    <location>
        <begin position="189"/>
        <end position="209"/>
    </location>
</feature>
<feature type="binding site" description="covalent" evidence="1">
    <location>
        <position position="38"/>
    </location>
    <ligand>
        <name>heme c</name>
        <dbReference type="ChEBI" id="CHEBI:61717"/>
    </ligand>
</feature>
<feature type="binding site" description="axial binding residue" evidence="1">
    <location>
        <position position="89"/>
    </location>
    <ligand>
        <name>heme b</name>
        <dbReference type="ChEBI" id="CHEBI:60344"/>
        <label>2</label>
    </ligand>
    <ligandPart>
        <name>Fe</name>
        <dbReference type="ChEBI" id="CHEBI:18248"/>
    </ligandPart>
</feature>
<feature type="binding site" description="axial binding residue" evidence="1">
    <location>
        <position position="103"/>
    </location>
    <ligand>
        <name>heme b</name>
        <dbReference type="ChEBI" id="CHEBI:60344"/>
        <label>1</label>
    </ligand>
    <ligandPart>
        <name>Fe</name>
        <dbReference type="ChEBI" id="CHEBI:18248"/>
    </ligandPart>
</feature>
<feature type="binding site" description="axial binding residue" evidence="1">
    <location>
        <position position="190"/>
    </location>
    <ligand>
        <name>heme b</name>
        <dbReference type="ChEBI" id="CHEBI:60344"/>
        <label>2</label>
    </ligand>
    <ligandPart>
        <name>Fe</name>
        <dbReference type="ChEBI" id="CHEBI:18248"/>
    </ligandPart>
</feature>
<feature type="binding site" description="axial binding residue" evidence="1">
    <location>
        <position position="205"/>
    </location>
    <ligand>
        <name>heme b</name>
        <dbReference type="ChEBI" id="CHEBI:60344"/>
        <label>1</label>
    </ligand>
    <ligandPart>
        <name>Fe</name>
        <dbReference type="ChEBI" id="CHEBI:18248"/>
    </ligandPart>
</feature>
<organism>
    <name type="scientific">Prochlorococcus marinus (strain AS9601)</name>
    <dbReference type="NCBI Taxonomy" id="146891"/>
    <lineage>
        <taxon>Bacteria</taxon>
        <taxon>Bacillati</taxon>
        <taxon>Cyanobacteriota</taxon>
        <taxon>Cyanophyceae</taxon>
        <taxon>Synechococcales</taxon>
        <taxon>Prochlorococcaceae</taxon>
        <taxon>Prochlorococcus</taxon>
    </lineage>
</organism>